<name>OTC_ACTPJ</name>
<reference key="1">
    <citation type="journal article" date="2008" name="PLoS ONE">
        <title>Genome biology of Actinobacillus pleuropneumoniae JL03, an isolate of serotype 3 prevalent in China.</title>
        <authorList>
            <person name="Xu Z."/>
            <person name="Zhou Y."/>
            <person name="Li L."/>
            <person name="Zhou R."/>
            <person name="Xiao S."/>
            <person name="Wan Y."/>
            <person name="Zhang S."/>
            <person name="Wang K."/>
            <person name="Li W."/>
            <person name="Li L."/>
            <person name="Jin H."/>
            <person name="Kang M."/>
            <person name="Dalai B."/>
            <person name="Li T."/>
            <person name="Liu L."/>
            <person name="Cheng Y."/>
            <person name="Zhang L."/>
            <person name="Xu T."/>
            <person name="Zheng H."/>
            <person name="Pu S."/>
            <person name="Wang B."/>
            <person name="Gu W."/>
            <person name="Zhang X.L."/>
            <person name="Zhu G.-F."/>
            <person name="Wang S."/>
            <person name="Zhao G.-P."/>
            <person name="Chen H."/>
        </authorList>
    </citation>
    <scope>NUCLEOTIDE SEQUENCE [LARGE SCALE GENOMIC DNA]</scope>
    <source>
        <strain>JL03</strain>
    </source>
</reference>
<organism>
    <name type="scientific">Actinobacillus pleuropneumoniae serotype 3 (strain JL03)</name>
    <dbReference type="NCBI Taxonomy" id="434271"/>
    <lineage>
        <taxon>Bacteria</taxon>
        <taxon>Pseudomonadati</taxon>
        <taxon>Pseudomonadota</taxon>
        <taxon>Gammaproteobacteria</taxon>
        <taxon>Pasteurellales</taxon>
        <taxon>Pasteurellaceae</taxon>
        <taxon>Actinobacillus</taxon>
    </lineage>
</organism>
<sequence length="334" mass="37339">MAFNLKNRHLLSLVNHTEREIKFLLDLSRDLKRAKYAGTEQQRLKGKNIALIFEKTSTRTRCAFEVAAYDQGAHVTYIDPTSSQIGHKESMKDTARVLGRMYDAIEYRGFKQSVVNELAEYAGVPVFNGLTDEFHPTQMLADVLTMIENCEKPLSQISYVYIGDARNNVGNSLLLIGAKLGMDVRICAPKALLPEDSLVEMCQKFAAESGARITVTDDIDTAVKGVDFVHTDVWVSMGEPLETWGERIDMLMPYQVTPELMKRTGNPKVKFMHCLPAFHNSETKIGKQVAEKYPALANGIEVTEDVFESPANVAFEQAENRMHTIKAVMVASLA</sequence>
<accession>B0BQQ2</accession>
<protein>
    <recommendedName>
        <fullName evidence="2">Ornithine carbamoyltransferase</fullName>
        <shortName evidence="2">OTCase</shortName>
        <ecNumber evidence="2">2.1.3.3</ecNumber>
    </recommendedName>
</protein>
<keyword id="KW-0056">Arginine metabolism</keyword>
<keyword id="KW-0963">Cytoplasm</keyword>
<keyword id="KW-0808">Transferase</keyword>
<feature type="chain" id="PRO_1000137086" description="Ornithine carbamoyltransferase">
    <location>
        <begin position="1"/>
        <end position="334"/>
    </location>
</feature>
<feature type="binding site" evidence="2">
    <location>
        <begin position="57"/>
        <end position="60"/>
    </location>
    <ligand>
        <name>carbamoyl phosphate</name>
        <dbReference type="ChEBI" id="CHEBI:58228"/>
    </ligand>
</feature>
<feature type="binding site" evidence="2">
    <location>
        <position position="84"/>
    </location>
    <ligand>
        <name>carbamoyl phosphate</name>
        <dbReference type="ChEBI" id="CHEBI:58228"/>
    </ligand>
</feature>
<feature type="binding site" evidence="2">
    <location>
        <position position="108"/>
    </location>
    <ligand>
        <name>carbamoyl phosphate</name>
        <dbReference type="ChEBI" id="CHEBI:58228"/>
    </ligand>
</feature>
<feature type="binding site" evidence="2">
    <location>
        <begin position="135"/>
        <end position="138"/>
    </location>
    <ligand>
        <name>carbamoyl phosphate</name>
        <dbReference type="ChEBI" id="CHEBI:58228"/>
    </ligand>
</feature>
<feature type="binding site" evidence="2">
    <location>
        <position position="168"/>
    </location>
    <ligand>
        <name>L-ornithine</name>
        <dbReference type="ChEBI" id="CHEBI:46911"/>
    </ligand>
</feature>
<feature type="binding site" evidence="2">
    <location>
        <position position="232"/>
    </location>
    <ligand>
        <name>L-ornithine</name>
        <dbReference type="ChEBI" id="CHEBI:46911"/>
    </ligand>
</feature>
<feature type="binding site" evidence="2">
    <location>
        <begin position="236"/>
        <end position="237"/>
    </location>
    <ligand>
        <name>L-ornithine</name>
        <dbReference type="ChEBI" id="CHEBI:46911"/>
    </ligand>
</feature>
<feature type="binding site" evidence="2">
    <location>
        <begin position="274"/>
        <end position="275"/>
    </location>
    <ligand>
        <name>carbamoyl phosphate</name>
        <dbReference type="ChEBI" id="CHEBI:58228"/>
    </ligand>
</feature>
<feature type="binding site" evidence="2">
    <location>
        <position position="321"/>
    </location>
    <ligand>
        <name>carbamoyl phosphate</name>
        <dbReference type="ChEBI" id="CHEBI:58228"/>
    </ligand>
</feature>
<evidence type="ECO:0000250" key="1"/>
<evidence type="ECO:0000255" key="2">
    <source>
        <dbReference type="HAMAP-Rule" id="MF_01109"/>
    </source>
</evidence>
<comment type="function">
    <text evidence="1">Reversibly catalyzes the transfer of the carbamoyl group from carbamoyl phosphate (CP) to the N(epsilon) atom of ornithine (ORN) to produce L-citrulline.</text>
</comment>
<comment type="catalytic activity">
    <reaction evidence="2">
        <text>carbamoyl phosphate + L-ornithine = L-citrulline + phosphate + H(+)</text>
        <dbReference type="Rhea" id="RHEA:19513"/>
        <dbReference type="ChEBI" id="CHEBI:15378"/>
        <dbReference type="ChEBI" id="CHEBI:43474"/>
        <dbReference type="ChEBI" id="CHEBI:46911"/>
        <dbReference type="ChEBI" id="CHEBI:57743"/>
        <dbReference type="ChEBI" id="CHEBI:58228"/>
        <dbReference type="EC" id="2.1.3.3"/>
    </reaction>
</comment>
<comment type="pathway">
    <text evidence="2">Amino-acid degradation; L-arginine degradation via ADI pathway; carbamoyl phosphate from L-arginine: step 2/2.</text>
</comment>
<comment type="subcellular location">
    <subcellularLocation>
        <location evidence="2">Cytoplasm</location>
    </subcellularLocation>
</comment>
<comment type="similarity">
    <text evidence="2">Belongs to the aspartate/ornithine carbamoyltransferase superfamily. OTCase family.</text>
</comment>
<gene>
    <name evidence="2" type="primary">arcB</name>
    <name type="ordered locus">APJL_1331</name>
</gene>
<dbReference type="EC" id="2.1.3.3" evidence="2"/>
<dbReference type="EMBL" id="CP000687">
    <property type="protein sequence ID" value="ABY69887.1"/>
    <property type="molecule type" value="Genomic_DNA"/>
</dbReference>
<dbReference type="RefSeq" id="WP_005598400.1">
    <property type="nucleotide sequence ID" value="NC_010278.1"/>
</dbReference>
<dbReference type="SMR" id="B0BQQ2"/>
<dbReference type="KEGG" id="apj:APJL_1331"/>
<dbReference type="HOGENOM" id="CLU_043846_3_1_6"/>
<dbReference type="UniPathway" id="UPA00254">
    <property type="reaction ID" value="UER00365"/>
</dbReference>
<dbReference type="Proteomes" id="UP000008547">
    <property type="component" value="Chromosome"/>
</dbReference>
<dbReference type="GO" id="GO:0005737">
    <property type="term" value="C:cytoplasm"/>
    <property type="evidence" value="ECO:0007669"/>
    <property type="project" value="UniProtKB-SubCell"/>
</dbReference>
<dbReference type="GO" id="GO:0016597">
    <property type="term" value="F:amino acid binding"/>
    <property type="evidence" value="ECO:0007669"/>
    <property type="project" value="InterPro"/>
</dbReference>
<dbReference type="GO" id="GO:0004585">
    <property type="term" value="F:ornithine carbamoyltransferase activity"/>
    <property type="evidence" value="ECO:0007669"/>
    <property type="project" value="UniProtKB-UniRule"/>
</dbReference>
<dbReference type="GO" id="GO:0042450">
    <property type="term" value="P:arginine biosynthetic process via ornithine"/>
    <property type="evidence" value="ECO:0007669"/>
    <property type="project" value="TreeGrafter"/>
</dbReference>
<dbReference type="GO" id="GO:0019547">
    <property type="term" value="P:arginine catabolic process to ornithine"/>
    <property type="evidence" value="ECO:0007669"/>
    <property type="project" value="UniProtKB-UniRule"/>
</dbReference>
<dbReference type="GO" id="GO:0019240">
    <property type="term" value="P:citrulline biosynthetic process"/>
    <property type="evidence" value="ECO:0007669"/>
    <property type="project" value="TreeGrafter"/>
</dbReference>
<dbReference type="FunFam" id="3.40.50.1370:FF:000003">
    <property type="entry name" value="Ornithine carbamoyltransferase"/>
    <property type="match status" value="1"/>
</dbReference>
<dbReference type="Gene3D" id="3.40.50.1370">
    <property type="entry name" value="Aspartate/ornithine carbamoyltransferase"/>
    <property type="match status" value="2"/>
</dbReference>
<dbReference type="HAMAP" id="MF_01109">
    <property type="entry name" value="OTCase"/>
    <property type="match status" value="1"/>
</dbReference>
<dbReference type="InterPro" id="IPR006132">
    <property type="entry name" value="Asp/Orn_carbamoyltranf_P-bd"/>
</dbReference>
<dbReference type="InterPro" id="IPR006130">
    <property type="entry name" value="Asp/Orn_carbamoylTrfase"/>
</dbReference>
<dbReference type="InterPro" id="IPR036901">
    <property type="entry name" value="Asp/Orn_carbamoylTrfase_sf"/>
</dbReference>
<dbReference type="InterPro" id="IPR006131">
    <property type="entry name" value="Asp_carbamoyltransf_Asp/Orn-bd"/>
</dbReference>
<dbReference type="InterPro" id="IPR002292">
    <property type="entry name" value="Orn/put_carbamltrans"/>
</dbReference>
<dbReference type="InterPro" id="IPR024904">
    <property type="entry name" value="OTCase_ArgI"/>
</dbReference>
<dbReference type="NCBIfam" id="TIGR00658">
    <property type="entry name" value="orni_carb_tr"/>
    <property type="match status" value="1"/>
</dbReference>
<dbReference type="NCBIfam" id="NF001986">
    <property type="entry name" value="PRK00779.1"/>
    <property type="match status" value="1"/>
</dbReference>
<dbReference type="NCBIfam" id="NF002470">
    <property type="entry name" value="PRK01713.1"/>
    <property type="match status" value="1"/>
</dbReference>
<dbReference type="NCBIfam" id="NF003286">
    <property type="entry name" value="PRK04284.1"/>
    <property type="match status" value="1"/>
</dbReference>
<dbReference type="PANTHER" id="PTHR45753:SF2">
    <property type="entry name" value="ORNITHINE CARBAMOYLTRANSFERASE"/>
    <property type="match status" value="1"/>
</dbReference>
<dbReference type="PANTHER" id="PTHR45753">
    <property type="entry name" value="ORNITHINE CARBAMOYLTRANSFERASE, MITOCHONDRIAL"/>
    <property type="match status" value="1"/>
</dbReference>
<dbReference type="Pfam" id="PF00185">
    <property type="entry name" value="OTCace"/>
    <property type="match status" value="1"/>
</dbReference>
<dbReference type="Pfam" id="PF02729">
    <property type="entry name" value="OTCace_N"/>
    <property type="match status" value="1"/>
</dbReference>
<dbReference type="PRINTS" id="PR00100">
    <property type="entry name" value="AOTCASE"/>
</dbReference>
<dbReference type="PRINTS" id="PR00102">
    <property type="entry name" value="OTCASE"/>
</dbReference>
<dbReference type="SUPFAM" id="SSF53671">
    <property type="entry name" value="Aspartate/ornithine carbamoyltransferase"/>
    <property type="match status" value="1"/>
</dbReference>
<dbReference type="PROSITE" id="PS00097">
    <property type="entry name" value="CARBAMOYLTRANSFERASE"/>
    <property type="match status" value="1"/>
</dbReference>
<proteinExistence type="inferred from homology"/>